<gene>
    <name evidence="1" type="primary">astC</name>
    <name evidence="1" type="synonym">argM</name>
    <name type="ordered locus">YPA_1344</name>
</gene>
<feature type="chain" id="PRO_0000262445" description="Succinylornithine transaminase">
    <location>
        <begin position="1"/>
        <end position="414"/>
    </location>
</feature>
<feature type="modified residue" description="N6-(pyridoxal phosphate)lysine" evidence="1">
    <location>
        <position position="260"/>
    </location>
</feature>
<sequence>MEQPSPVTRQSFDEWIVPTYAPADFIVVRGEGSTLWDQQGKSYIDFAGGIAVNALGHGHPAVRAALIEQADKVWHLGNGYTNEPVLRLAKQLIDATFAEKVFFCNSGAEANEAALKLARKYALDNFANKAGQQGEKNQIVAFRNAFHGRTLFTVSAGGQPKYSQDFAPLPGGIHHGIFNDLASAEHLITDQTCAVIVEPIQGEGGVLPADKEFLHGLRALCDRHNALLIFDEIQTGVGRTGELYAYMHYGVSPDVLTSAKALGGGFPIGAMLTTTKYASALSVGSHGTTFGGNPLACAVAGTVLSLINQPTLLAGVKARHQWFIDELAEINARHNVFAEIRGRGLLIGCVLNAQYAGKSKEIVQAAAQYGLIALIAGPDVVRFAPSLIISPKEIKEGLARLAMGIEQVCQKVTS</sequence>
<reference key="1">
    <citation type="journal article" date="2006" name="J. Bacteriol.">
        <title>Complete genome sequence of Yersinia pestis strains Antiqua and Nepal516: evidence of gene reduction in an emerging pathogen.</title>
        <authorList>
            <person name="Chain P.S.G."/>
            <person name="Hu P."/>
            <person name="Malfatti S.A."/>
            <person name="Radnedge L."/>
            <person name="Larimer F."/>
            <person name="Vergez L.M."/>
            <person name="Worsham P."/>
            <person name="Chu M.C."/>
            <person name="Andersen G.L."/>
        </authorList>
    </citation>
    <scope>NUCLEOTIDE SEQUENCE [LARGE SCALE GENOMIC DNA]</scope>
    <source>
        <strain>Antiqua</strain>
    </source>
</reference>
<protein>
    <recommendedName>
        <fullName evidence="1">Succinylornithine transaminase</fullName>
        <shortName>SOAT</shortName>
        <ecNumber evidence="1">2.6.1.81</ecNumber>
    </recommendedName>
    <alternativeName>
        <fullName evidence="1">Succinylornithine aminotransferase</fullName>
    </alternativeName>
</protein>
<organism>
    <name type="scientific">Yersinia pestis bv. Antiqua (strain Antiqua)</name>
    <dbReference type="NCBI Taxonomy" id="360102"/>
    <lineage>
        <taxon>Bacteria</taxon>
        <taxon>Pseudomonadati</taxon>
        <taxon>Pseudomonadota</taxon>
        <taxon>Gammaproteobacteria</taxon>
        <taxon>Enterobacterales</taxon>
        <taxon>Yersiniaceae</taxon>
        <taxon>Yersinia</taxon>
    </lineage>
</organism>
<accession>Q1C8B1</accession>
<name>ASTC_YERPA</name>
<keyword id="KW-0032">Aminotransferase</keyword>
<keyword id="KW-0056">Arginine metabolism</keyword>
<keyword id="KW-0663">Pyridoxal phosphate</keyword>
<keyword id="KW-0808">Transferase</keyword>
<comment type="function">
    <text evidence="1">Catalyzes the transamination of N(2)-succinylornithine and alpha-ketoglutarate into N(2)-succinylglutamate semialdehyde and glutamate. Can also act as an acetylornithine aminotransferase.</text>
</comment>
<comment type="catalytic activity">
    <reaction evidence="1">
        <text>N(2)-succinyl-L-ornithine + 2-oxoglutarate = N-succinyl-L-glutamate 5-semialdehyde + L-glutamate</text>
        <dbReference type="Rhea" id="RHEA:16953"/>
        <dbReference type="ChEBI" id="CHEBI:16810"/>
        <dbReference type="ChEBI" id="CHEBI:29985"/>
        <dbReference type="ChEBI" id="CHEBI:58514"/>
        <dbReference type="ChEBI" id="CHEBI:58520"/>
        <dbReference type="EC" id="2.6.1.81"/>
    </reaction>
</comment>
<comment type="cofactor">
    <cofactor evidence="1">
        <name>pyridoxal 5'-phosphate</name>
        <dbReference type="ChEBI" id="CHEBI:597326"/>
    </cofactor>
</comment>
<comment type="pathway">
    <text evidence="1">Amino-acid degradation; L-arginine degradation via AST pathway; L-glutamate and succinate from L-arginine: step 3/5.</text>
</comment>
<comment type="similarity">
    <text evidence="1">Belongs to the class-III pyridoxal-phosphate-dependent aminotransferase family. AstC subfamily.</text>
</comment>
<proteinExistence type="inferred from homology"/>
<dbReference type="EC" id="2.6.1.81" evidence="1"/>
<dbReference type="EMBL" id="CP000308">
    <property type="protein sequence ID" value="ABG13311.1"/>
    <property type="molecule type" value="Genomic_DNA"/>
</dbReference>
<dbReference type="RefSeq" id="WP_002216140.1">
    <property type="nucleotide sequence ID" value="NZ_CP009906.1"/>
</dbReference>
<dbReference type="SMR" id="Q1C8B1"/>
<dbReference type="KEGG" id="ypa:YPA_1344"/>
<dbReference type="UniPathway" id="UPA00185">
    <property type="reaction ID" value="UER00281"/>
</dbReference>
<dbReference type="Proteomes" id="UP000001971">
    <property type="component" value="Chromosome"/>
</dbReference>
<dbReference type="GO" id="GO:0042802">
    <property type="term" value="F:identical protein binding"/>
    <property type="evidence" value="ECO:0007669"/>
    <property type="project" value="TreeGrafter"/>
</dbReference>
<dbReference type="GO" id="GO:0030170">
    <property type="term" value="F:pyridoxal phosphate binding"/>
    <property type="evidence" value="ECO:0007669"/>
    <property type="project" value="UniProtKB-UniRule"/>
</dbReference>
<dbReference type="GO" id="GO:0043825">
    <property type="term" value="F:succinylornithine transaminase activity"/>
    <property type="evidence" value="ECO:0007669"/>
    <property type="project" value="UniProtKB-EC"/>
</dbReference>
<dbReference type="GO" id="GO:1901607">
    <property type="term" value="P:alpha-amino acid biosynthetic process"/>
    <property type="evidence" value="ECO:0007669"/>
    <property type="project" value="UniProtKB-ARBA"/>
</dbReference>
<dbReference type="GO" id="GO:0019544">
    <property type="term" value="P:arginine catabolic process to glutamate"/>
    <property type="evidence" value="ECO:0007669"/>
    <property type="project" value="UniProtKB-UniRule"/>
</dbReference>
<dbReference type="GO" id="GO:0019545">
    <property type="term" value="P:arginine catabolic process to succinate"/>
    <property type="evidence" value="ECO:0007669"/>
    <property type="project" value="UniProtKB-UniRule"/>
</dbReference>
<dbReference type="GO" id="GO:0006593">
    <property type="term" value="P:ornithine catabolic process"/>
    <property type="evidence" value="ECO:0007669"/>
    <property type="project" value="InterPro"/>
</dbReference>
<dbReference type="CDD" id="cd00610">
    <property type="entry name" value="OAT_like"/>
    <property type="match status" value="1"/>
</dbReference>
<dbReference type="FunFam" id="3.40.640.10:FF:000004">
    <property type="entry name" value="Acetylornithine aminotransferase"/>
    <property type="match status" value="1"/>
</dbReference>
<dbReference type="Gene3D" id="3.90.1150.10">
    <property type="entry name" value="Aspartate Aminotransferase, domain 1"/>
    <property type="match status" value="1"/>
</dbReference>
<dbReference type="Gene3D" id="3.40.640.10">
    <property type="entry name" value="Type I PLP-dependent aspartate aminotransferase-like (Major domain)"/>
    <property type="match status" value="1"/>
</dbReference>
<dbReference type="HAMAP" id="MF_01107">
    <property type="entry name" value="ArgD_aminotrans_3"/>
    <property type="match status" value="1"/>
</dbReference>
<dbReference type="HAMAP" id="MF_01173">
    <property type="entry name" value="AstC_aminotrans_3"/>
    <property type="match status" value="1"/>
</dbReference>
<dbReference type="InterPro" id="IPR017652">
    <property type="entry name" value="Ac/SucOrn_transaminase_bac"/>
</dbReference>
<dbReference type="InterPro" id="IPR004636">
    <property type="entry name" value="AcOrn/SuccOrn_fam"/>
</dbReference>
<dbReference type="InterPro" id="IPR005814">
    <property type="entry name" value="Aminotrans_3"/>
</dbReference>
<dbReference type="InterPro" id="IPR049704">
    <property type="entry name" value="Aminotrans_3_PPA_site"/>
</dbReference>
<dbReference type="InterPro" id="IPR050103">
    <property type="entry name" value="Class-III_PLP-dep_AT"/>
</dbReference>
<dbReference type="InterPro" id="IPR015424">
    <property type="entry name" value="PyrdxlP-dep_Trfase"/>
</dbReference>
<dbReference type="InterPro" id="IPR015421">
    <property type="entry name" value="PyrdxlP-dep_Trfase_major"/>
</dbReference>
<dbReference type="InterPro" id="IPR015422">
    <property type="entry name" value="PyrdxlP-dep_Trfase_small"/>
</dbReference>
<dbReference type="InterPro" id="IPR026330">
    <property type="entry name" value="SOAT"/>
</dbReference>
<dbReference type="NCBIfam" id="TIGR03246">
    <property type="entry name" value="arg_catab_astC"/>
    <property type="match status" value="1"/>
</dbReference>
<dbReference type="NCBIfam" id="TIGR00707">
    <property type="entry name" value="argD"/>
    <property type="match status" value="1"/>
</dbReference>
<dbReference type="NCBIfam" id="NF002325">
    <property type="entry name" value="PRK01278.1"/>
    <property type="match status" value="1"/>
</dbReference>
<dbReference type="NCBIfam" id="NF003468">
    <property type="entry name" value="PRK05093.1"/>
    <property type="match status" value="1"/>
</dbReference>
<dbReference type="NCBIfam" id="NF009047">
    <property type="entry name" value="PRK12381.1"/>
    <property type="match status" value="1"/>
</dbReference>
<dbReference type="PANTHER" id="PTHR11986">
    <property type="entry name" value="AMINOTRANSFERASE CLASS III"/>
    <property type="match status" value="1"/>
</dbReference>
<dbReference type="PANTHER" id="PTHR11986:SF113">
    <property type="entry name" value="SUCCINYLORNITHINE TRANSAMINASE"/>
    <property type="match status" value="1"/>
</dbReference>
<dbReference type="Pfam" id="PF00202">
    <property type="entry name" value="Aminotran_3"/>
    <property type="match status" value="1"/>
</dbReference>
<dbReference type="PIRSF" id="PIRSF000521">
    <property type="entry name" value="Transaminase_4ab_Lys_Orn"/>
    <property type="match status" value="1"/>
</dbReference>
<dbReference type="SUPFAM" id="SSF53383">
    <property type="entry name" value="PLP-dependent transferases"/>
    <property type="match status" value="1"/>
</dbReference>
<dbReference type="PROSITE" id="PS00600">
    <property type="entry name" value="AA_TRANSFER_CLASS_3"/>
    <property type="match status" value="1"/>
</dbReference>
<evidence type="ECO:0000255" key="1">
    <source>
        <dbReference type="HAMAP-Rule" id="MF_01173"/>
    </source>
</evidence>